<keyword id="KW-1185">Reference proteome</keyword>
<dbReference type="EMBL" id="L77117">
    <property type="protein sequence ID" value="AAB98837.1"/>
    <property type="molecule type" value="Genomic_DNA"/>
</dbReference>
<dbReference type="PIR" id="B64404">
    <property type="entry name" value="B64404"/>
</dbReference>
<dbReference type="STRING" id="243232.MJ_0834"/>
<dbReference type="PaxDb" id="243232-MJ_0834"/>
<dbReference type="EnsemblBacteria" id="AAB98837">
    <property type="protein sequence ID" value="AAB98837"/>
    <property type="gene ID" value="MJ_0834"/>
</dbReference>
<dbReference type="KEGG" id="mja:MJ_0834"/>
<dbReference type="eggNOG" id="arCOG09555">
    <property type="taxonomic scope" value="Archaea"/>
</dbReference>
<dbReference type="HOGENOM" id="CLU_1253590_0_0_2"/>
<dbReference type="InParanoid" id="Q58244"/>
<dbReference type="OrthoDB" id="65695at2157"/>
<dbReference type="Proteomes" id="UP000000805">
    <property type="component" value="Chromosome"/>
</dbReference>
<dbReference type="InterPro" id="IPR038765">
    <property type="entry name" value="Papain-like_cys_pep_sf"/>
</dbReference>
<dbReference type="SUPFAM" id="SSF54001">
    <property type="entry name" value="Cysteine proteinases"/>
    <property type="match status" value="1"/>
</dbReference>
<dbReference type="PROSITE" id="PS51257">
    <property type="entry name" value="PROKAR_LIPOPROTEIN"/>
    <property type="match status" value="1"/>
</dbReference>
<proteinExistence type="predicted"/>
<sequence>MFMDYKYFFITIILISIFCGCYEKSYSFVEYNRHYELNEPNNTKNPNYDQNIFLNHDLPKTYPKMYKFPKNYYELSDKMFPDVKKRDLDTLSYILKTIKLPAYKKNYYDCSEASCQLEWILEGYGFKTYLVYGILDTYGNSGSHMWVAVQLDNGKMVLVESTYLCENYYCPDYAIIYKNYNLNNIVIVRDMKYIPKFYADTPDMFLIPHNNRRFLITQLDWWNHPKNAEIKKEMFNLK</sequence>
<name>Y834_METJA</name>
<feature type="chain" id="PRO_0000107069" description="Uncharacterized protein MJ0834">
    <location>
        <begin position="1"/>
        <end position="238"/>
    </location>
</feature>
<reference key="1">
    <citation type="journal article" date="1996" name="Science">
        <title>Complete genome sequence of the methanogenic archaeon, Methanococcus jannaschii.</title>
        <authorList>
            <person name="Bult C.J."/>
            <person name="White O."/>
            <person name="Olsen G.J."/>
            <person name="Zhou L."/>
            <person name="Fleischmann R.D."/>
            <person name="Sutton G.G."/>
            <person name="Blake J.A."/>
            <person name="FitzGerald L.M."/>
            <person name="Clayton R.A."/>
            <person name="Gocayne J.D."/>
            <person name="Kerlavage A.R."/>
            <person name="Dougherty B.A."/>
            <person name="Tomb J.-F."/>
            <person name="Adams M.D."/>
            <person name="Reich C.I."/>
            <person name="Overbeek R."/>
            <person name="Kirkness E.F."/>
            <person name="Weinstock K.G."/>
            <person name="Merrick J.M."/>
            <person name="Glodek A."/>
            <person name="Scott J.L."/>
            <person name="Geoghagen N.S.M."/>
            <person name="Weidman J.F."/>
            <person name="Fuhrmann J.L."/>
            <person name="Nguyen D."/>
            <person name="Utterback T.R."/>
            <person name="Kelley J.M."/>
            <person name="Peterson J.D."/>
            <person name="Sadow P.W."/>
            <person name="Hanna M.C."/>
            <person name="Cotton M.D."/>
            <person name="Roberts K.M."/>
            <person name="Hurst M.A."/>
            <person name="Kaine B.P."/>
            <person name="Borodovsky M."/>
            <person name="Klenk H.-P."/>
            <person name="Fraser C.M."/>
            <person name="Smith H.O."/>
            <person name="Woese C.R."/>
            <person name="Venter J.C."/>
        </authorList>
    </citation>
    <scope>NUCLEOTIDE SEQUENCE [LARGE SCALE GENOMIC DNA]</scope>
    <source>
        <strain>ATCC 43067 / DSM 2661 / JAL-1 / JCM 10045 / NBRC 100440</strain>
    </source>
</reference>
<accession>Q58244</accession>
<organism>
    <name type="scientific">Methanocaldococcus jannaschii (strain ATCC 43067 / DSM 2661 / JAL-1 / JCM 10045 / NBRC 100440)</name>
    <name type="common">Methanococcus jannaschii</name>
    <dbReference type="NCBI Taxonomy" id="243232"/>
    <lineage>
        <taxon>Archaea</taxon>
        <taxon>Methanobacteriati</taxon>
        <taxon>Methanobacteriota</taxon>
        <taxon>Methanomada group</taxon>
        <taxon>Methanococci</taxon>
        <taxon>Methanococcales</taxon>
        <taxon>Methanocaldococcaceae</taxon>
        <taxon>Methanocaldococcus</taxon>
    </lineage>
</organism>
<gene>
    <name type="ordered locus">MJ0834</name>
</gene>
<protein>
    <recommendedName>
        <fullName>Uncharacterized protein MJ0834</fullName>
    </recommendedName>
</protein>